<comment type="catalytic activity">
    <reaction evidence="1">
        <text>N-(5-phospho-beta-D-ribosyl)anthranilate = 1-(2-carboxyphenylamino)-1-deoxy-D-ribulose 5-phosphate</text>
        <dbReference type="Rhea" id="RHEA:21540"/>
        <dbReference type="ChEBI" id="CHEBI:18277"/>
        <dbReference type="ChEBI" id="CHEBI:58613"/>
        <dbReference type="EC" id="5.3.1.24"/>
    </reaction>
</comment>
<comment type="pathway">
    <text evidence="1">Amino-acid biosynthesis; L-tryptophan biosynthesis; L-tryptophan from chorismate: step 3/5.</text>
</comment>
<comment type="similarity">
    <text evidence="1">Belongs to the TrpF family.</text>
</comment>
<reference key="1">
    <citation type="journal article" date="2004" name="Proc. Natl. Acad. Sci. U.S.A.">
        <title>Complete genomes of two clinical Staphylococcus aureus strains: evidence for the rapid evolution of virulence and drug resistance.</title>
        <authorList>
            <person name="Holden M.T.G."/>
            <person name="Feil E.J."/>
            <person name="Lindsay J.A."/>
            <person name="Peacock S.J."/>
            <person name="Day N.P.J."/>
            <person name="Enright M.C."/>
            <person name="Foster T.J."/>
            <person name="Moore C.E."/>
            <person name="Hurst L."/>
            <person name="Atkin R."/>
            <person name="Barron A."/>
            <person name="Bason N."/>
            <person name="Bentley S.D."/>
            <person name="Chillingworth C."/>
            <person name="Chillingworth T."/>
            <person name="Churcher C."/>
            <person name="Clark L."/>
            <person name="Corton C."/>
            <person name="Cronin A."/>
            <person name="Doggett J."/>
            <person name="Dowd L."/>
            <person name="Feltwell T."/>
            <person name="Hance Z."/>
            <person name="Harris B."/>
            <person name="Hauser H."/>
            <person name="Holroyd S."/>
            <person name="Jagels K."/>
            <person name="James K.D."/>
            <person name="Lennard N."/>
            <person name="Line A."/>
            <person name="Mayes R."/>
            <person name="Moule S."/>
            <person name="Mungall K."/>
            <person name="Ormond D."/>
            <person name="Quail M.A."/>
            <person name="Rabbinowitsch E."/>
            <person name="Rutherford K.M."/>
            <person name="Sanders M."/>
            <person name="Sharp S."/>
            <person name="Simmonds M."/>
            <person name="Stevens K."/>
            <person name="Whitehead S."/>
            <person name="Barrell B.G."/>
            <person name="Spratt B.G."/>
            <person name="Parkhill J."/>
        </authorList>
    </citation>
    <scope>NUCLEOTIDE SEQUENCE [LARGE SCALE GENOMIC DNA]</scope>
    <source>
        <strain>MRSA252</strain>
    </source>
</reference>
<sequence>MKLKFCGFTSIKDVTAASQLPIDAIGFIHYEKSKRHQTITQIKKLASAVPDHIDKVCVVVNPDLTTIEHVLSNTPINTIQLHGTESIDFIQEIKKKYSSIKITKALAADENIIQNINKYKGFVDLFIIDTPSVSYGGTGQTYDWTILKNIKDIPYLIAGGINTENIQTVNQFKLSHQGFDLASGIEVNGRKDIEKMTAIVNIVKGDRENE</sequence>
<organism>
    <name type="scientific">Staphylococcus aureus (strain MRSA252)</name>
    <dbReference type="NCBI Taxonomy" id="282458"/>
    <lineage>
        <taxon>Bacteria</taxon>
        <taxon>Bacillati</taxon>
        <taxon>Bacillota</taxon>
        <taxon>Bacilli</taxon>
        <taxon>Bacillales</taxon>
        <taxon>Staphylococcaceae</taxon>
        <taxon>Staphylococcus</taxon>
    </lineage>
</organism>
<evidence type="ECO:0000255" key="1">
    <source>
        <dbReference type="HAMAP-Rule" id="MF_00135"/>
    </source>
</evidence>
<protein>
    <recommendedName>
        <fullName evidence="1">N-(5'-phosphoribosyl)anthranilate isomerase</fullName>
        <shortName evidence="1">PRAI</shortName>
        <ecNumber evidence="1">5.3.1.24</ecNumber>
    </recommendedName>
</protein>
<proteinExistence type="inferred from homology"/>
<feature type="chain" id="PRO_0000154379" description="N-(5'-phosphoribosyl)anthranilate isomerase">
    <location>
        <begin position="1"/>
        <end position="210"/>
    </location>
</feature>
<keyword id="KW-0028">Amino-acid biosynthesis</keyword>
<keyword id="KW-0057">Aromatic amino acid biosynthesis</keyword>
<keyword id="KW-0413">Isomerase</keyword>
<keyword id="KW-0822">Tryptophan biosynthesis</keyword>
<name>TRPF_STAAR</name>
<accession>Q6GH34</accession>
<dbReference type="EC" id="5.3.1.24" evidence="1"/>
<dbReference type="EMBL" id="BX571856">
    <property type="protein sequence ID" value="CAG40382.1"/>
    <property type="molecule type" value="Genomic_DNA"/>
</dbReference>
<dbReference type="RefSeq" id="WP_000768182.1">
    <property type="nucleotide sequence ID" value="NC_002952.2"/>
</dbReference>
<dbReference type="SMR" id="Q6GH34"/>
<dbReference type="KEGG" id="sar:SAR1384"/>
<dbReference type="HOGENOM" id="CLU_076364_1_1_9"/>
<dbReference type="UniPathway" id="UPA00035">
    <property type="reaction ID" value="UER00042"/>
</dbReference>
<dbReference type="Proteomes" id="UP000000596">
    <property type="component" value="Chromosome"/>
</dbReference>
<dbReference type="GO" id="GO:0004640">
    <property type="term" value="F:phosphoribosylanthranilate isomerase activity"/>
    <property type="evidence" value="ECO:0007669"/>
    <property type="project" value="UniProtKB-UniRule"/>
</dbReference>
<dbReference type="GO" id="GO:0000162">
    <property type="term" value="P:L-tryptophan biosynthetic process"/>
    <property type="evidence" value="ECO:0007669"/>
    <property type="project" value="UniProtKB-UniRule"/>
</dbReference>
<dbReference type="CDD" id="cd00405">
    <property type="entry name" value="PRAI"/>
    <property type="match status" value="1"/>
</dbReference>
<dbReference type="Gene3D" id="3.20.20.70">
    <property type="entry name" value="Aldolase class I"/>
    <property type="match status" value="1"/>
</dbReference>
<dbReference type="HAMAP" id="MF_00135">
    <property type="entry name" value="PRAI"/>
    <property type="match status" value="1"/>
</dbReference>
<dbReference type="InterPro" id="IPR013785">
    <property type="entry name" value="Aldolase_TIM"/>
</dbReference>
<dbReference type="InterPro" id="IPR001240">
    <property type="entry name" value="PRAI_dom"/>
</dbReference>
<dbReference type="InterPro" id="IPR011060">
    <property type="entry name" value="RibuloseP-bd_barrel"/>
</dbReference>
<dbReference type="InterPro" id="IPR044643">
    <property type="entry name" value="TrpF_fam"/>
</dbReference>
<dbReference type="NCBIfam" id="NF010563">
    <property type="entry name" value="PRK13958.1"/>
    <property type="match status" value="1"/>
</dbReference>
<dbReference type="PANTHER" id="PTHR42894">
    <property type="entry name" value="N-(5'-PHOSPHORIBOSYL)ANTHRANILATE ISOMERASE"/>
    <property type="match status" value="1"/>
</dbReference>
<dbReference type="PANTHER" id="PTHR42894:SF1">
    <property type="entry name" value="N-(5'-PHOSPHORIBOSYL)ANTHRANILATE ISOMERASE"/>
    <property type="match status" value="1"/>
</dbReference>
<dbReference type="Pfam" id="PF00697">
    <property type="entry name" value="PRAI"/>
    <property type="match status" value="1"/>
</dbReference>
<dbReference type="SUPFAM" id="SSF51366">
    <property type="entry name" value="Ribulose-phoshate binding barrel"/>
    <property type="match status" value="1"/>
</dbReference>
<gene>
    <name evidence="1" type="primary">trpF</name>
    <name type="ordered locus">SAR1384</name>
</gene>